<organism>
    <name type="scientific">Homo sapiens</name>
    <name type="common">Human</name>
    <dbReference type="NCBI Taxonomy" id="9606"/>
    <lineage>
        <taxon>Eukaryota</taxon>
        <taxon>Metazoa</taxon>
        <taxon>Chordata</taxon>
        <taxon>Craniata</taxon>
        <taxon>Vertebrata</taxon>
        <taxon>Euteleostomi</taxon>
        <taxon>Mammalia</taxon>
        <taxon>Eutheria</taxon>
        <taxon>Euarchontoglires</taxon>
        <taxon>Primates</taxon>
        <taxon>Haplorrhini</taxon>
        <taxon>Catarrhini</taxon>
        <taxon>Hominidae</taxon>
        <taxon>Homo</taxon>
    </lineage>
</organism>
<reference key="1">
    <citation type="journal article" date="2001" name="Biochem. Biophys. Res. Commun.">
        <title>Identification of a novel autoantigen UACA in patients with panuveitis.</title>
        <authorList>
            <person name="Yamada K."/>
            <person name="Senju S."/>
            <person name="Nakatsura T."/>
            <person name="Murata Y."/>
            <person name="Ishihara M."/>
            <person name="Nakamura S."/>
            <person name="Ohno S."/>
            <person name="Negi A."/>
            <person name="Nishimura Y."/>
        </authorList>
    </citation>
    <scope>NUCLEOTIDE SEQUENCE [MRNA] (ISOFORM 1)</scope>
    <scope>TISSUE SPECIFICITY</scope>
</reference>
<reference key="2">
    <citation type="journal article" date="2000" name="DNA Res.">
        <title>Prediction of the coding sequences of unidentified human genes. XVIII. The complete sequences of 100 new cDNA clones from brain which code for large proteins in vitro.</title>
        <authorList>
            <person name="Nagase T."/>
            <person name="Kikuno R."/>
            <person name="Nakayama M."/>
            <person name="Hirosawa M."/>
            <person name="Ohara O."/>
        </authorList>
    </citation>
    <scope>NUCLEOTIDE SEQUENCE [LARGE SCALE MRNA] (ISOFORM 1)</scope>
    <source>
        <tissue>Brain</tissue>
    </source>
</reference>
<reference key="3">
    <citation type="journal article" date="2002" name="DNA Res.">
        <title>Construction of expression-ready cDNA clones for KIAA genes: manual curation of 330 KIAA cDNA clones.</title>
        <authorList>
            <person name="Nakajima D."/>
            <person name="Okazaki N."/>
            <person name="Yamakawa H."/>
            <person name="Kikuno R."/>
            <person name="Ohara O."/>
            <person name="Nagase T."/>
        </authorList>
    </citation>
    <scope>SEQUENCE REVISION</scope>
</reference>
<reference key="4">
    <citation type="journal article" date="2006" name="Nature">
        <title>Analysis of the DNA sequence and duplication history of human chromosome 15.</title>
        <authorList>
            <person name="Zody M.C."/>
            <person name="Garber M."/>
            <person name="Sharpe T."/>
            <person name="Young S.K."/>
            <person name="Rowen L."/>
            <person name="O'Neill K."/>
            <person name="Whittaker C.A."/>
            <person name="Kamal M."/>
            <person name="Chang J.L."/>
            <person name="Cuomo C.A."/>
            <person name="Dewar K."/>
            <person name="FitzGerald M.G."/>
            <person name="Kodira C.D."/>
            <person name="Madan A."/>
            <person name="Qin S."/>
            <person name="Yang X."/>
            <person name="Abbasi N."/>
            <person name="Abouelleil A."/>
            <person name="Arachchi H.M."/>
            <person name="Baradarani L."/>
            <person name="Birditt B."/>
            <person name="Bloom S."/>
            <person name="Bloom T."/>
            <person name="Borowsky M.L."/>
            <person name="Burke J."/>
            <person name="Butler J."/>
            <person name="Cook A."/>
            <person name="DeArellano K."/>
            <person name="DeCaprio D."/>
            <person name="Dorris L. III"/>
            <person name="Dors M."/>
            <person name="Eichler E.E."/>
            <person name="Engels R."/>
            <person name="Fahey J."/>
            <person name="Fleetwood P."/>
            <person name="Friedman C."/>
            <person name="Gearin G."/>
            <person name="Hall J.L."/>
            <person name="Hensley G."/>
            <person name="Johnson E."/>
            <person name="Jones C."/>
            <person name="Kamat A."/>
            <person name="Kaur A."/>
            <person name="Locke D.P."/>
            <person name="Madan A."/>
            <person name="Munson G."/>
            <person name="Jaffe D.B."/>
            <person name="Lui A."/>
            <person name="Macdonald P."/>
            <person name="Mauceli E."/>
            <person name="Naylor J.W."/>
            <person name="Nesbitt R."/>
            <person name="Nicol R."/>
            <person name="O'Leary S.B."/>
            <person name="Ratcliffe A."/>
            <person name="Rounsley S."/>
            <person name="She X."/>
            <person name="Sneddon K.M.B."/>
            <person name="Stewart S."/>
            <person name="Sougnez C."/>
            <person name="Stone S.M."/>
            <person name="Topham K."/>
            <person name="Vincent D."/>
            <person name="Wang S."/>
            <person name="Zimmer A.R."/>
            <person name="Birren B.W."/>
            <person name="Hood L."/>
            <person name="Lander E.S."/>
            <person name="Nusbaum C."/>
        </authorList>
    </citation>
    <scope>NUCLEOTIDE SEQUENCE [LARGE SCALE GENOMIC DNA]</scope>
</reference>
<reference key="5">
    <citation type="submission" date="2005-07" db="EMBL/GenBank/DDBJ databases">
        <authorList>
            <person name="Mural R.J."/>
            <person name="Istrail S."/>
            <person name="Sutton G."/>
            <person name="Florea L."/>
            <person name="Halpern A.L."/>
            <person name="Mobarry C.M."/>
            <person name="Lippert R."/>
            <person name="Walenz B."/>
            <person name="Shatkay H."/>
            <person name="Dew I."/>
            <person name="Miller J.R."/>
            <person name="Flanigan M.J."/>
            <person name="Edwards N.J."/>
            <person name="Bolanos R."/>
            <person name="Fasulo D."/>
            <person name="Halldorsson B.V."/>
            <person name="Hannenhalli S."/>
            <person name="Turner R."/>
            <person name="Yooseph S."/>
            <person name="Lu F."/>
            <person name="Nusskern D.R."/>
            <person name="Shue B.C."/>
            <person name="Zheng X.H."/>
            <person name="Zhong F."/>
            <person name="Delcher A.L."/>
            <person name="Huson D.H."/>
            <person name="Kravitz S.A."/>
            <person name="Mouchard L."/>
            <person name="Reinert K."/>
            <person name="Remington K.A."/>
            <person name="Clark A.G."/>
            <person name="Waterman M.S."/>
            <person name="Eichler E.E."/>
            <person name="Adams M.D."/>
            <person name="Hunkapiller M.W."/>
            <person name="Myers E.W."/>
            <person name="Venter J.C."/>
        </authorList>
    </citation>
    <scope>NUCLEOTIDE SEQUENCE [LARGE SCALE GENOMIC DNA]</scope>
</reference>
<reference key="6">
    <citation type="journal article" date="2004" name="Genome Res.">
        <title>The status, quality, and expansion of the NIH full-length cDNA project: the Mammalian Gene Collection (MGC).</title>
        <authorList>
            <consortium name="The MGC Project Team"/>
        </authorList>
    </citation>
    <scope>NUCLEOTIDE SEQUENCE [LARGE SCALE MRNA] (ISOFORM 1)</scope>
    <source>
        <tissue>Brain</tissue>
    </source>
</reference>
<reference key="7">
    <citation type="journal article" date="2004" name="Nat. Genet.">
        <title>Complete sequencing and characterization of 21,243 full-length human cDNAs.</title>
        <authorList>
            <person name="Ota T."/>
            <person name="Suzuki Y."/>
            <person name="Nishikawa T."/>
            <person name="Otsuki T."/>
            <person name="Sugiyama T."/>
            <person name="Irie R."/>
            <person name="Wakamatsu A."/>
            <person name="Hayashi K."/>
            <person name="Sato H."/>
            <person name="Nagai K."/>
            <person name="Kimura K."/>
            <person name="Makita H."/>
            <person name="Sekine M."/>
            <person name="Obayashi M."/>
            <person name="Nishi T."/>
            <person name="Shibahara T."/>
            <person name="Tanaka T."/>
            <person name="Ishii S."/>
            <person name="Yamamoto J."/>
            <person name="Saito K."/>
            <person name="Kawai Y."/>
            <person name="Isono Y."/>
            <person name="Nakamura Y."/>
            <person name="Nagahari K."/>
            <person name="Murakami K."/>
            <person name="Yasuda T."/>
            <person name="Iwayanagi T."/>
            <person name="Wagatsuma M."/>
            <person name="Shiratori A."/>
            <person name="Sudo H."/>
            <person name="Hosoiri T."/>
            <person name="Kaku Y."/>
            <person name="Kodaira H."/>
            <person name="Kondo H."/>
            <person name="Sugawara M."/>
            <person name="Takahashi M."/>
            <person name="Kanda K."/>
            <person name="Yokoi T."/>
            <person name="Furuya T."/>
            <person name="Kikkawa E."/>
            <person name="Omura Y."/>
            <person name="Abe K."/>
            <person name="Kamihara K."/>
            <person name="Katsuta N."/>
            <person name="Sato K."/>
            <person name="Tanikawa M."/>
            <person name="Yamazaki M."/>
            <person name="Ninomiya K."/>
            <person name="Ishibashi T."/>
            <person name="Yamashita H."/>
            <person name="Murakawa K."/>
            <person name="Fujimori K."/>
            <person name="Tanai H."/>
            <person name="Kimata M."/>
            <person name="Watanabe M."/>
            <person name="Hiraoka S."/>
            <person name="Chiba Y."/>
            <person name="Ishida S."/>
            <person name="Ono Y."/>
            <person name="Takiguchi S."/>
            <person name="Watanabe S."/>
            <person name="Yosida M."/>
            <person name="Hotuta T."/>
            <person name="Kusano J."/>
            <person name="Kanehori K."/>
            <person name="Takahashi-Fujii A."/>
            <person name="Hara H."/>
            <person name="Tanase T.-O."/>
            <person name="Nomura Y."/>
            <person name="Togiya S."/>
            <person name="Komai F."/>
            <person name="Hara R."/>
            <person name="Takeuchi K."/>
            <person name="Arita M."/>
            <person name="Imose N."/>
            <person name="Musashino K."/>
            <person name="Yuuki H."/>
            <person name="Oshima A."/>
            <person name="Sasaki N."/>
            <person name="Aotsuka S."/>
            <person name="Yoshikawa Y."/>
            <person name="Matsunawa H."/>
            <person name="Ichihara T."/>
            <person name="Shiohata N."/>
            <person name="Sano S."/>
            <person name="Moriya S."/>
            <person name="Momiyama H."/>
            <person name="Satoh N."/>
            <person name="Takami S."/>
            <person name="Terashima Y."/>
            <person name="Suzuki O."/>
            <person name="Nakagawa S."/>
            <person name="Senoh A."/>
            <person name="Mizoguchi H."/>
            <person name="Goto Y."/>
            <person name="Shimizu F."/>
            <person name="Wakebe H."/>
            <person name="Hishigaki H."/>
            <person name="Watanabe T."/>
            <person name="Sugiyama A."/>
            <person name="Takemoto M."/>
            <person name="Kawakami B."/>
            <person name="Yamazaki M."/>
            <person name="Watanabe K."/>
            <person name="Kumagai A."/>
            <person name="Itakura S."/>
            <person name="Fukuzumi Y."/>
            <person name="Fujimori Y."/>
            <person name="Komiyama M."/>
            <person name="Tashiro H."/>
            <person name="Tanigami A."/>
            <person name="Fujiwara T."/>
            <person name="Ono T."/>
            <person name="Yamada K."/>
            <person name="Fujii Y."/>
            <person name="Ozaki K."/>
            <person name="Hirao M."/>
            <person name="Ohmori Y."/>
            <person name="Kawabata A."/>
            <person name="Hikiji T."/>
            <person name="Kobatake N."/>
            <person name="Inagaki H."/>
            <person name="Ikema Y."/>
            <person name="Okamoto S."/>
            <person name="Okitani R."/>
            <person name="Kawakami T."/>
            <person name="Noguchi S."/>
            <person name="Itoh T."/>
            <person name="Shigeta K."/>
            <person name="Senba T."/>
            <person name="Matsumura K."/>
            <person name="Nakajima Y."/>
            <person name="Mizuno T."/>
            <person name="Morinaga M."/>
            <person name="Sasaki M."/>
            <person name="Togashi T."/>
            <person name="Oyama M."/>
            <person name="Hata H."/>
            <person name="Watanabe M."/>
            <person name="Komatsu T."/>
            <person name="Mizushima-Sugano J."/>
            <person name="Satoh T."/>
            <person name="Shirai Y."/>
            <person name="Takahashi Y."/>
            <person name="Nakagawa K."/>
            <person name="Okumura K."/>
            <person name="Nagase T."/>
            <person name="Nomura N."/>
            <person name="Kikuchi H."/>
            <person name="Masuho Y."/>
            <person name="Yamashita R."/>
            <person name="Nakai K."/>
            <person name="Yada T."/>
            <person name="Nakamura Y."/>
            <person name="Ohara O."/>
            <person name="Isogai T."/>
            <person name="Sugano S."/>
        </authorList>
    </citation>
    <scope>NUCLEOTIDE SEQUENCE [LARGE SCALE MRNA] OF 646-1187 (ISOFORM 1/2)</scope>
    <scope>NUCLEOTIDE SEQUENCE [LARGE SCALE MRNA] OF 1-634 (ISOFORM 2)</scope>
    <source>
        <tissue>Brain</tissue>
        <tissue>Embryo</tissue>
    </source>
</reference>
<reference key="8">
    <citation type="journal article" date="2007" name="BMC Genomics">
        <title>The full-ORF clone resource of the German cDNA consortium.</title>
        <authorList>
            <person name="Bechtel S."/>
            <person name="Rosenfelder H."/>
            <person name="Duda A."/>
            <person name="Schmidt C.P."/>
            <person name="Ernst U."/>
            <person name="Wellenreuther R."/>
            <person name="Mehrle A."/>
            <person name="Schuster C."/>
            <person name="Bahr A."/>
            <person name="Bloecker H."/>
            <person name="Heubner D."/>
            <person name="Hoerlein A."/>
            <person name="Michel G."/>
            <person name="Wedler H."/>
            <person name="Koehrer K."/>
            <person name="Ottenwaelder B."/>
            <person name="Poustka A."/>
            <person name="Wiemann S."/>
            <person name="Schupp I."/>
        </authorList>
    </citation>
    <scope>NUCLEOTIDE SEQUENCE [LARGE SCALE MRNA] OF 1181-1416 (ISOFORM 1/2)</scope>
    <source>
        <tissue>Brain</tissue>
    </source>
</reference>
<reference key="9">
    <citation type="journal article" date="2004" name="Biochem. Biophys. Res. Commun.">
        <title>Detection of the novel autoantibody (anti-UACA antibody) in patients with Graves' disease.</title>
        <authorList>
            <person name="Ohkura T."/>
            <person name="Taniguchi S."/>
            <person name="Yamada K."/>
            <person name="Nishio N."/>
            <person name="Okamura T."/>
            <person name="Yoshida A."/>
            <person name="Kamijou K."/>
            <person name="Fukata S."/>
            <person name="Kuma K."/>
            <person name="Inoue Y."/>
            <person name="Hisatome I."/>
            <person name="Senju S."/>
            <person name="Nishimura Y."/>
            <person name="Shigemasa C."/>
        </authorList>
    </citation>
    <scope>TISSUE SPECIFICITY</scope>
    <scope>SUBCELLULAR LOCATION</scope>
    <scope>INDUCTION</scope>
</reference>
<reference key="10">
    <citation type="journal article" date="2011" name="BMC Syst. Biol.">
        <title>Initial characterization of the human central proteome.</title>
        <authorList>
            <person name="Burkard T.R."/>
            <person name="Planyavsky M."/>
            <person name="Kaupe I."/>
            <person name="Breitwieser F.P."/>
            <person name="Buerckstuemmer T."/>
            <person name="Bennett K.L."/>
            <person name="Superti-Furga G."/>
            <person name="Colinge J."/>
        </authorList>
    </citation>
    <scope>IDENTIFICATION BY MASS SPECTROMETRY [LARGE SCALE ANALYSIS]</scope>
</reference>
<reference key="11">
    <citation type="journal article" date="2012" name="Proc. Natl. Acad. Sci. U.S.A.">
        <title>N-terminal acetylome analyses and functional insights of the N-terminal acetyltransferase NatB.</title>
        <authorList>
            <person name="Van Damme P."/>
            <person name="Lasa M."/>
            <person name="Polevoda B."/>
            <person name="Gazquez C."/>
            <person name="Elosegui-Artola A."/>
            <person name="Kim D.S."/>
            <person name="De Juan-Pardo E."/>
            <person name="Demeyer K."/>
            <person name="Hole K."/>
            <person name="Larrea E."/>
            <person name="Timmerman E."/>
            <person name="Prieto J."/>
            <person name="Arnesen T."/>
            <person name="Sherman F."/>
            <person name="Gevaert K."/>
            <person name="Aldabe R."/>
        </authorList>
    </citation>
    <scope>ACETYLATION [LARGE SCALE ANALYSIS] AT MET-1</scope>
    <scope>IDENTIFICATION BY MASS SPECTROMETRY [LARGE SCALE ANALYSIS]</scope>
</reference>
<reference key="12">
    <citation type="journal article" date="2014" name="Nat. Struct. Mol. Biol.">
        <title>Uncovering global SUMOylation signaling networks in a site-specific manner.</title>
        <authorList>
            <person name="Hendriks I.A."/>
            <person name="D'Souza R.C."/>
            <person name="Yang B."/>
            <person name="Verlaan-de Vries M."/>
            <person name="Mann M."/>
            <person name="Vertegaal A.C."/>
        </authorList>
    </citation>
    <scope>SUMOYLATION [LARGE SCALE ANALYSIS] AT LYS-1035</scope>
    <scope>IDENTIFICATION BY MASS SPECTROMETRY [LARGE SCALE ANALYSIS]</scope>
</reference>
<dbReference type="EMBL" id="AF322916">
    <property type="protein sequence ID" value="AAG49577.1"/>
    <property type="molecule type" value="mRNA"/>
</dbReference>
<dbReference type="EMBL" id="AB046781">
    <property type="protein sequence ID" value="BAB13387.2"/>
    <property type="molecule type" value="mRNA"/>
</dbReference>
<dbReference type="EMBL" id="AC009269">
    <property type="status" value="NOT_ANNOTATED_CDS"/>
    <property type="molecule type" value="Genomic_DNA"/>
</dbReference>
<dbReference type="EMBL" id="AC087699">
    <property type="status" value="NOT_ANNOTATED_CDS"/>
    <property type="molecule type" value="Genomic_DNA"/>
</dbReference>
<dbReference type="EMBL" id="CH471082">
    <property type="protein sequence ID" value="EAW77855.1"/>
    <property type="molecule type" value="Genomic_DNA"/>
</dbReference>
<dbReference type="EMBL" id="BC113407">
    <property type="protein sequence ID" value="AAI13408.1"/>
    <property type="molecule type" value="mRNA"/>
</dbReference>
<dbReference type="EMBL" id="BC113409">
    <property type="protein sequence ID" value="AAI13410.1"/>
    <property type="molecule type" value="mRNA"/>
</dbReference>
<dbReference type="EMBL" id="AK000990">
    <property type="protein sequence ID" value="BAA91457.1"/>
    <property type="status" value="ALT_INIT"/>
    <property type="molecule type" value="mRNA"/>
</dbReference>
<dbReference type="EMBL" id="AK055435">
    <property type="protein sequence ID" value="BAB70922.1"/>
    <property type="molecule type" value="mRNA"/>
</dbReference>
<dbReference type="EMBL" id="AL834464">
    <property type="protein sequence ID" value="CAD39123.1"/>
    <property type="molecule type" value="mRNA"/>
</dbReference>
<dbReference type="CCDS" id="CCDS10235.1">
    <molecule id="Q9BZF9-1"/>
</dbReference>
<dbReference type="CCDS" id="CCDS32280.1">
    <molecule id="Q9BZF9-2"/>
</dbReference>
<dbReference type="RefSeq" id="NP_001008225.1">
    <molecule id="Q9BZF9-2"/>
    <property type="nucleotide sequence ID" value="NM_001008224.3"/>
</dbReference>
<dbReference type="RefSeq" id="NP_060473.2">
    <molecule id="Q9BZF9-1"/>
    <property type="nucleotide sequence ID" value="NM_018003.4"/>
</dbReference>
<dbReference type="SMR" id="Q9BZF9"/>
<dbReference type="BioGRID" id="120392">
    <property type="interactions" value="152"/>
</dbReference>
<dbReference type="DIP" id="DIP-33117N"/>
<dbReference type="FunCoup" id="Q9BZF9">
    <property type="interactions" value="1353"/>
</dbReference>
<dbReference type="IntAct" id="Q9BZF9">
    <property type="interactions" value="91"/>
</dbReference>
<dbReference type="MINT" id="Q9BZF9"/>
<dbReference type="STRING" id="9606.ENSP00000314556"/>
<dbReference type="GlyGen" id="Q9BZF9">
    <property type="glycosylation" value="2 sites, 1 N-linked glycan (1 site), 1 O-linked glycan (1 site)"/>
</dbReference>
<dbReference type="iPTMnet" id="Q9BZF9"/>
<dbReference type="PhosphoSitePlus" id="Q9BZF9"/>
<dbReference type="SwissPalm" id="Q9BZF9"/>
<dbReference type="BioMuta" id="UACA"/>
<dbReference type="DMDM" id="91207950"/>
<dbReference type="jPOST" id="Q9BZF9"/>
<dbReference type="MassIVE" id="Q9BZF9"/>
<dbReference type="PaxDb" id="9606-ENSP00000314556"/>
<dbReference type="PeptideAtlas" id="Q9BZF9"/>
<dbReference type="ProteomicsDB" id="33739"/>
<dbReference type="ProteomicsDB" id="77515"/>
<dbReference type="ProteomicsDB" id="79836">
    <molecule id="Q9BZF9-1"/>
</dbReference>
<dbReference type="Pumba" id="Q9BZF9"/>
<dbReference type="Antibodypedia" id="26467">
    <property type="antibodies" value="308 antibodies from 26 providers"/>
</dbReference>
<dbReference type="DNASU" id="55075"/>
<dbReference type="Ensembl" id="ENST00000322954.11">
    <molecule id="Q9BZF9-1"/>
    <property type="protein sequence ID" value="ENSP00000314556.6"/>
    <property type="gene ID" value="ENSG00000137831.15"/>
</dbReference>
<dbReference type="Ensembl" id="ENST00000379983.6">
    <molecule id="Q9BZF9-2"/>
    <property type="protein sequence ID" value="ENSP00000369319.2"/>
    <property type="gene ID" value="ENSG00000137831.15"/>
</dbReference>
<dbReference type="GeneID" id="55075"/>
<dbReference type="KEGG" id="hsa:55075"/>
<dbReference type="MANE-Select" id="ENST00000322954.11">
    <property type="protein sequence ID" value="ENSP00000314556.6"/>
    <property type="RefSeq nucleotide sequence ID" value="NM_018003.4"/>
    <property type="RefSeq protein sequence ID" value="NP_060473.2"/>
</dbReference>
<dbReference type="UCSC" id="uc002asq.4">
    <molecule id="Q9BZF9-1"/>
    <property type="organism name" value="human"/>
</dbReference>
<dbReference type="AGR" id="HGNC:15947"/>
<dbReference type="CTD" id="55075"/>
<dbReference type="DisGeNET" id="55075"/>
<dbReference type="GeneCards" id="UACA"/>
<dbReference type="HGNC" id="HGNC:15947">
    <property type="gene designation" value="UACA"/>
</dbReference>
<dbReference type="HPA" id="ENSG00000137831">
    <property type="expression patterns" value="Tissue enhanced (skeletal)"/>
</dbReference>
<dbReference type="MIM" id="612516">
    <property type="type" value="gene"/>
</dbReference>
<dbReference type="neXtProt" id="NX_Q9BZF9"/>
<dbReference type="OpenTargets" id="ENSG00000137831"/>
<dbReference type="PharmGKB" id="PA38062"/>
<dbReference type="VEuPathDB" id="HostDB:ENSG00000137831"/>
<dbReference type="eggNOG" id="ENOG502QPYN">
    <property type="taxonomic scope" value="Eukaryota"/>
</dbReference>
<dbReference type="GeneTree" id="ENSGT00940000157475"/>
<dbReference type="HOGENOM" id="CLU_005323_1_0_1"/>
<dbReference type="InParanoid" id="Q9BZF9"/>
<dbReference type="OMA" id="KCHEMEK"/>
<dbReference type="OrthoDB" id="341259at2759"/>
<dbReference type="PAN-GO" id="Q9BZF9">
    <property type="GO annotations" value="4 GO annotations based on evolutionary models"/>
</dbReference>
<dbReference type="PhylomeDB" id="Q9BZF9"/>
<dbReference type="TreeFam" id="TF331274"/>
<dbReference type="PathwayCommons" id="Q9BZF9"/>
<dbReference type="Reactome" id="R-HSA-9013407">
    <property type="pathway name" value="RHOH GTPase cycle"/>
</dbReference>
<dbReference type="Reactome" id="R-HSA-9627069">
    <property type="pathway name" value="Regulation of the apoptosome activity"/>
</dbReference>
<dbReference type="SignaLink" id="Q9BZF9"/>
<dbReference type="BioGRID-ORCS" id="55075">
    <property type="hits" value="14 hits in 1157 CRISPR screens"/>
</dbReference>
<dbReference type="ChiTaRS" id="UACA">
    <property type="organism name" value="human"/>
</dbReference>
<dbReference type="GeneWiki" id="UACA"/>
<dbReference type="GenomeRNAi" id="55075"/>
<dbReference type="Pharos" id="Q9BZF9">
    <property type="development level" value="Tbio"/>
</dbReference>
<dbReference type="PRO" id="PR:Q9BZF9"/>
<dbReference type="Proteomes" id="UP000005640">
    <property type="component" value="Chromosome 15"/>
</dbReference>
<dbReference type="RNAct" id="Q9BZF9">
    <property type="molecule type" value="protein"/>
</dbReference>
<dbReference type="Bgee" id="ENSG00000137831">
    <property type="expression patterns" value="Expressed in calcaneal tendon and 190 other cell types or tissues"/>
</dbReference>
<dbReference type="ExpressionAtlas" id="Q9BZF9">
    <property type="expression patterns" value="baseline and differential"/>
</dbReference>
<dbReference type="GO" id="GO:0005856">
    <property type="term" value="C:cytoskeleton"/>
    <property type="evidence" value="ECO:0007669"/>
    <property type="project" value="UniProtKB-SubCell"/>
</dbReference>
<dbReference type="GO" id="GO:0005829">
    <property type="term" value="C:cytosol"/>
    <property type="evidence" value="ECO:0000314"/>
    <property type="project" value="HPA"/>
</dbReference>
<dbReference type="GO" id="GO:0070062">
    <property type="term" value="C:extracellular exosome"/>
    <property type="evidence" value="ECO:0007005"/>
    <property type="project" value="UniProtKB"/>
</dbReference>
<dbReference type="GO" id="GO:0005576">
    <property type="term" value="C:extracellular region"/>
    <property type="evidence" value="ECO:0000303"/>
    <property type="project" value="UniProtKB"/>
</dbReference>
<dbReference type="GO" id="GO:0005654">
    <property type="term" value="C:nucleoplasm"/>
    <property type="evidence" value="ECO:0000314"/>
    <property type="project" value="HPA"/>
</dbReference>
<dbReference type="GO" id="GO:0005634">
    <property type="term" value="C:nucleus"/>
    <property type="evidence" value="ECO:0000318"/>
    <property type="project" value="GO_Central"/>
</dbReference>
<dbReference type="GO" id="GO:0003779">
    <property type="term" value="F:actin binding"/>
    <property type="evidence" value="ECO:0007669"/>
    <property type="project" value="InterPro"/>
</dbReference>
<dbReference type="GO" id="GO:0008630">
    <property type="term" value="P:intrinsic apoptotic signaling pathway in response to DNA damage"/>
    <property type="evidence" value="ECO:0000318"/>
    <property type="project" value="GO_Central"/>
</dbReference>
<dbReference type="GO" id="GO:0008631">
    <property type="term" value="P:intrinsic apoptotic signaling pathway in response to oxidative stress"/>
    <property type="evidence" value="ECO:0000318"/>
    <property type="project" value="GO_Central"/>
</dbReference>
<dbReference type="GO" id="GO:0050728">
    <property type="term" value="P:negative regulation of inflammatory response"/>
    <property type="evidence" value="ECO:0000318"/>
    <property type="project" value="GO_Central"/>
</dbReference>
<dbReference type="GO" id="GO:1901223">
    <property type="term" value="P:negative regulation of non-canonical NF-kappaB signal transduction"/>
    <property type="evidence" value="ECO:0000318"/>
    <property type="project" value="GO_Central"/>
</dbReference>
<dbReference type="FunFam" id="1.25.40.20:FF:000083">
    <property type="entry name" value="Uveal autoantigen with coiled-coil domains and ankyrin repeats"/>
    <property type="match status" value="1"/>
</dbReference>
<dbReference type="FunFam" id="1.25.40.20:FF:000287">
    <property type="entry name" value="Uveal autoantigen with coiled-coil domains and ankyrin repeats"/>
    <property type="match status" value="1"/>
</dbReference>
<dbReference type="Gene3D" id="1.25.40.20">
    <property type="entry name" value="Ankyrin repeat-containing domain"/>
    <property type="match status" value="2"/>
</dbReference>
<dbReference type="InterPro" id="IPR002110">
    <property type="entry name" value="Ankyrin_rpt"/>
</dbReference>
<dbReference type="InterPro" id="IPR036770">
    <property type="entry name" value="Ankyrin_rpt-contain_sf"/>
</dbReference>
<dbReference type="InterPro" id="IPR042420">
    <property type="entry name" value="RAI14/UACA"/>
</dbReference>
<dbReference type="InterPro" id="IPR000727">
    <property type="entry name" value="T_SNARE_dom"/>
</dbReference>
<dbReference type="PANTHER" id="PTHR24129">
    <property type="entry name" value="ANKYCORBIN"/>
    <property type="match status" value="1"/>
</dbReference>
<dbReference type="PANTHER" id="PTHR24129:SF1">
    <property type="entry name" value="UVEAL AUTOANTIGEN WITH COILED-COIL DOMAINS AND ANKYRIN REPEATS"/>
    <property type="match status" value="1"/>
</dbReference>
<dbReference type="Pfam" id="PF12796">
    <property type="entry name" value="Ank_2"/>
    <property type="match status" value="1"/>
</dbReference>
<dbReference type="Pfam" id="PF13606">
    <property type="entry name" value="Ank_3"/>
    <property type="match status" value="1"/>
</dbReference>
<dbReference type="PRINTS" id="PR01415">
    <property type="entry name" value="ANKYRIN"/>
</dbReference>
<dbReference type="SMART" id="SM00248">
    <property type="entry name" value="ANK"/>
    <property type="match status" value="6"/>
</dbReference>
<dbReference type="SUPFAM" id="SSF48403">
    <property type="entry name" value="Ankyrin repeat"/>
    <property type="match status" value="1"/>
</dbReference>
<dbReference type="PROSITE" id="PS50297">
    <property type="entry name" value="ANK_REP_REGION"/>
    <property type="match status" value="1"/>
</dbReference>
<dbReference type="PROSITE" id="PS50088">
    <property type="entry name" value="ANK_REPEAT"/>
    <property type="match status" value="5"/>
</dbReference>
<dbReference type="PROSITE" id="PS50192">
    <property type="entry name" value="T_SNARE"/>
    <property type="match status" value="1"/>
</dbReference>
<keyword id="KW-0007">Acetylation</keyword>
<keyword id="KW-0025">Alternative splicing</keyword>
<keyword id="KW-0040">ANK repeat</keyword>
<keyword id="KW-0175">Coiled coil</keyword>
<keyword id="KW-0963">Cytoplasm</keyword>
<keyword id="KW-0206">Cytoskeleton</keyword>
<keyword id="KW-1017">Isopeptide bond</keyword>
<keyword id="KW-0539">Nucleus</keyword>
<keyword id="KW-1267">Proteomics identification</keyword>
<keyword id="KW-1185">Reference proteome</keyword>
<keyword id="KW-0677">Repeat</keyword>
<keyword id="KW-0832">Ubl conjugation</keyword>
<protein>
    <recommendedName>
        <fullName>Uveal autoantigen with coiled-coil domains and ankyrin repeats</fullName>
    </recommendedName>
</protein>
<accession>Q9BZF9</accession>
<accession>G3XAG2</accession>
<accession>Q14DD3</accession>
<accession>Q8N3B8</accession>
<accession>Q96NH6</accession>
<accession>Q9HCL1</accession>
<accession>Q9NWC6</accession>
<feature type="chain" id="PRO_0000231650" description="Uveal autoantigen with coiled-coil domains and ankyrin repeats">
    <location>
        <begin position="1"/>
        <end position="1416"/>
    </location>
</feature>
<feature type="repeat" description="ANK 1">
    <location>
        <begin position="38"/>
        <end position="66"/>
    </location>
</feature>
<feature type="repeat" description="ANK 2">
    <location>
        <begin position="67"/>
        <end position="96"/>
    </location>
</feature>
<feature type="repeat" description="ANK 3">
    <location>
        <begin position="100"/>
        <end position="129"/>
    </location>
</feature>
<feature type="repeat" description="ANK 4">
    <location>
        <begin position="133"/>
        <end position="162"/>
    </location>
</feature>
<feature type="repeat" description="ANK 5">
    <location>
        <begin position="166"/>
        <end position="195"/>
    </location>
</feature>
<feature type="repeat" description="ANK 6">
    <location>
        <begin position="199"/>
        <end position="228"/>
    </location>
</feature>
<feature type="region of interest" description="Disordered" evidence="5">
    <location>
        <begin position="1"/>
        <end position="24"/>
    </location>
</feature>
<feature type="coiled-coil region" evidence="4">
    <location>
        <begin position="286"/>
        <end position="374"/>
    </location>
</feature>
<feature type="coiled-coil region" evidence="4">
    <location>
        <begin position="438"/>
        <end position="1386"/>
    </location>
</feature>
<feature type="modified residue" description="N-acetylmethionine" evidence="10">
    <location>
        <position position="1"/>
    </location>
</feature>
<feature type="cross-link" description="Glycyl lysine isopeptide (Lys-Gly) (interchain with G-Cter in SUMO2)" evidence="11">
    <location>
        <position position="1035"/>
    </location>
</feature>
<feature type="splice variant" id="VSP_047199" description="In isoform 2." evidence="8">
    <original>MKSLKSRLRRQDVPGPASSGAAAASA</original>
    <variation>MMNCWFSCTPKNR</variation>
    <location>
        <begin position="1"/>
        <end position="26"/>
    </location>
</feature>
<feature type="sequence variant" id="VAR_048313" description="In dbSNP:rs3743315.">
    <original>I</original>
    <variation>T</variation>
    <location>
        <position position="814"/>
    </location>
</feature>
<feature type="sequence conflict" description="In Ref. 1; AAG49577." evidence="9" ref="1">
    <original>HDA</original>
    <variation>QKK</variation>
    <location>
        <begin position="139"/>
        <end position="141"/>
    </location>
</feature>
<feature type="sequence conflict" description="In Ref. 1; AAG49577." evidence="9" ref="1">
    <original>D</original>
    <variation>K</variation>
    <location>
        <position position="166"/>
    </location>
</feature>
<name>UACA_HUMAN</name>
<evidence type="ECO:0000250" key="1"/>
<evidence type="ECO:0000250" key="2">
    <source>
        <dbReference type="UniProtKB" id="Q8CGB3"/>
    </source>
</evidence>
<evidence type="ECO:0000250" key="3">
    <source>
        <dbReference type="UniProtKB" id="Q8HYY4"/>
    </source>
</evidence>
<evidence type="ECO:0000255" key="4"/>
<evidence type="ECO:0000256" key="5">
    <source>
        <dbReference type="SAM" id="MobiDB-lite"/>
    </source>
</evidence>
<evidence type="ECO:0000269" key="6">
    <source>
    </source>
</evidence>
<evidence type="ECO:0000269" key="7">
    <source>
    </source>
</evidence>
<evidence type="ECO:0000303" key="8">
    <source>
    </source>
</evidence>
<evidence type="ECO:0000305" key="9"/>
<evidence type="ECO:0007744" key="10">
    <source>
    </source>
</evidence>
<evidence type="ECO:0007744" key="11">
    <source>
    </source>
</evidence>
<sequence length="1416" mass="162505">MKSLKSRLRRQDVPGPASSGAAAASAHAADWNKYDDRLMKAAERGDVEKVTSILAKKGVNPGKLDVEGRSVFHVVTSKGNLECLNAILIHGVDITTSDTAGRNALHLAAKYGHALCLQKLLQYNCPTEHADLQGRTALHDAAMADCPSSIQLLCDHGASVNAKDVDGRTPLVLATQMSRPTICQLLIDRGADVNSRDKQNRTALMLGCEYGCRDAVEVLIKNGADISLLDALGHDSSYYARIGDNLDILTLLKTASENTNKGRELWKKGPSLQQRNLTHMQDEVNVKSHQREHQNIQDLEIENEDLKERLRKIQQEQRILLDKVNGLQLQLNEEVMVADDLESEREKLKSLLAAKEKQHEESLRTIEALKNRFKYFESDHLGSGSHFSNRKEDMLLKQGQMYMADSQCTSPGIPAHMQSRSMLRPLELSLPSQTSYSENEILKKELEAMRTFCESAKQDRLKLQNELAHKVAECKALALECERVKEDSDEQIKQLEDALKDVQKRMYESEGKVKQMQTHFLALKEHLTSEAASGNHRLTEELKDQLKDLKVKYEGASAEVGKLRNQIKQNEMIVEEFKRDEGKLIEENKRLQKELSMCEMEREKKGRKVTEMEGQAKELSAKLALSIPAEKFENMKSSLSNEVNEKAKKLVEMEREHEKSLSEIRQLKRELENVKAKLAQHVKPEEHEQVKSRLEQKSGELGKKITELTLKNQTLQKEIEKVYLDNKLLKEQAHNLTIEMKNHYVPLKVSEDMKKSHDAIIDDLNRKLLDVTQKYTEKKLEMEKLLLENDSLSKDVSRLETVFVPPEKHEKEIIALKSNIVELKKQLSELKKKCGEDQEKIHALTSENTNLKKMMSNQYVPVKTHEEVKMTLNDTLAKTNRELLDVKKKFEDINQEFVKIKDKNEILKRNLENTQNQIKAEYISLAEHEAKMSSLSQSMRKVQDSNAEILANYRKGQEEIVTLHAEIKAQKKELDTIQECIKVKYAPIVSFEECERKFKATEKELKDQLSEQTQKYSVSEEEVKKNKQENDKLKKEIFTLQKDLRDKTVLIEKSHEMERALSRKTDELNKQLKDLSQKYTEVKNVKEKLVEENAKQTSEILAVQNLLQKQHVPLEQVEALKKSLNGTIENLKEELKSMQRCYEKEQQTVTKLHQLLENQKNSSVPLAEHLQIKEAFEKEVGIIKASLREKEEESQNKMEEVSKLQSEVQNTKQALKKLETREVVDLSKYKATKSDLETQISSLNEKLANLNRKYEEVCEEVLHAKKKEISAKDEKELLHFSIEQEIKDQKERCDKSLTTITELQRRIQESAKQIEAKDNKITELLNDVERLKQALNGLSQLTYTSGNPTKRQSQLIDTLQHQVKSLEQQLADADRQHQEVIAIYRTHLLSAAQGHMDEDVQEALLQIIQMRQGLVC</sequence>
<proteinExistence type="evidence at protein level"/>
<comment type="function">
    <text evidence="1">Regulates APAF1 expression and plays an important role in the regulation of stress-induced apoptosis. Promotes apoptosis by regulating three pathways, apoptosome up-regulation, LGALS3/galectin-3 down-regulation and NF-kappa-B inactivation. Regulates the redistribution of APAF1 into the nucleus after proapoptotic stress. Down-regulates the expression of LGALS3 by inhibiting NFKB1 (By similarity).</text>
</comment>
<comment type="function">
    <text evidence="2 3">Modulates isoactin dynamics to regulate the morphological alterations required for cell growth and motility. Interaction with ARF6 may modulate cell shape and motility after injury. May be involved in multiple neurite formation (By similarity).</text>
</comment>
<comment type="subunit">
    <text evidence="2 3">Component of the apoptosome complex, composed of APAF1, pro-caspase-9 and UACA. In the complex, it probably interacts directly with APAF1. Interacts with LGALS3, ARF6 and ACTB. Interacts with RAB39A (By similarity).</text>
</comment>
<comment type="interaction">
    <interactant intactId="EBI-350510">
        <id>Q9BZF9</id>
    </interactant>
    <interactant intactId="EBI-2371423">
        <id>O43865</id>
        <label>AHCYL1</label>
    </interactant>
    <organismsDiffer>false</organismsDiffer>
    <experiments>3</experiments>
</comment>
<comment type="interaction">
    <interactant intactId="EBI-350510">
        <id>Q9BZF9</id>
    </interactant>
    <interactant intactId="EBI-11977221">
        <id>Q86Z20</id>
        <label>CCDC125</label>
    </interactant>
    <organismsDiffer>false</organismsDiffer>
    <experiments>3</experiments>
</comment>
<comment type="interaction">
    <interactant intactId="EBI-350510">
        <id>Q9BZF9</id>
    </interactant>
    <interactant intactId="EBI-745632">
        <id>Q9NWT6</id>
        <label>HIF1AN</label>
    </interactant>
    <organismsDiffer>false</organismsDiffer>
    <experiments>2</experiments>
</comment>
<comment type="interaction">
    <interactant intactId="EBI-350510">
        <id>Q9BZF9</id>
    </interactant>
    <interactant intactId="EBI-948001">
        <id>Q15323</id>
        <label>KRT31</label>
    </interactant>
    <organismsDiffer>false</organismsDiffer>
    <experiments>3</experiments>
</comment>
<comment type="interaction">
    <interactant intactId="EBI-350510">
        <id>Q9BZF9</id>
    </interactant>
    <interactant intactId="EBI-10171697">
        <id>Q6A162</id>
        <label>KRT40</label>
    </interactant>
    <organismsDiffer>false</organismsDiffer>
    <experiments>3</experiments>
</comment>
<comment type="interaction">
    <interactant intactId="EBI-350510">
        <id>Q9BZF9</id>
    </interactant>
    <interactant intactId="EBI-79165">
        <id>Q9NRD5</id>
        <label>PICK1</label>
    </interactant>
    <organismsDiffer>false</organismsDiffer>
    <experiments>4</experiments>
</comment>
<comment type="interaction">
    <interactant intactId="EBI-350510">
        <id>Q9BZF9</id>
    </interactant>
    <interactant intactId="EBI-2805516">
        <id>P31321</id>
        <label>PRKAR1B</label>
    </interactant>
    <organismsDiffer>false</organismsDiffer>
    <experiments>3</experiments>
</comment>
<comment type="interaction">
    <interactant intactId="EBI-350510">
        <id>Q9BZF9</id>
    </interactant>
    <interactant intactId="EBI-10244780">
        <id>Q5QGT7</id>
        <label>RTP2</label>
    </interactant>
    <organismsDiffer>false</organismsDiffer>
    <experiments>3</experiments>
</comment>
<comment type="interaction">
    <interactant intactId="EBI-350510">
        <id>Q9BZF9</id>
    </interactant>
    <interactant intactId="EBI-947187">
        <id>Q9UHD9</id>
        <label>UBQLN2</label>
    </interactant>
    <organismsDiffer>false</organismsDiffer>
    <experiments>3</experiments>
</comment>
<comment type="subcellular location">
    <subcellularLocation>
        <location evidence="7">Nucleus</location>
    </subcellularLocation>
    <subcellularLocation>
        <location evidence="7">Cytoplasm</location>
    </subcellularLocation>
    <subcellularLocation>
        <location evidence="7">Cytoplasm</location>
        <location evidence="7">Cytoskeleton</location>
    </subcellularLocation>
    <text>Expressed diffusely in cytoplasm.</text>
</comment>
<comment type="alternative products">
    <event type="alternative splicing"/>
    <isoform>
        <id>Q9BZF9-1</id>
        <name>1</name>
        <sequence type="displayed"/>
    </isoform>
    <isoform>
        <id>Q9BZF9-2</id>
        <name>2</name>
        <sequence type="described" ref="VSP_047199"/>
    </isoform>
</comment>
<comment type="tissue specificity">
    <text evidence="6 7">Highly expressed in skeletal muscle, heart, kidney and pancreas. Expressed in choroid, retina and epidermal melanocytes. Expressed in eye muscles and thyroid follicular cells.</text>
</comment>
<comment type="induction">
    <text evidence="7">Up-regulated after TSH stimulation.</text>
</comment>
<comment type="miscellaneous">
    <text>UACA is a possible target autoantigen in Vogt-Koyanagi-Harada (VKH), Behcet disease (BD) and sarcoidosis that cause different types of panuevitis.</text>
</comment>
<comment type="sequence caution" evidence="9">
    <conflict type="erroneous initiation">
        <sequence resource="EMBL-CDS" id="BAA91457"/>
    </conflict>
</comment>
<gene>
    <name type="primary">UACA</name>
    <name type="synonym">KIAA1561</name>
</gene>